<reference key="1">
    <citation type="journal article" date="2010" name="Genome Biol.">
        <title>Structure and dynamics of the pan-genome of Streptococcus pneumoniae and closely related species.</title>
        <authorList>
            <person name="Donati C."/>
            <person name="Hiller N.L."/>
            <person name="Tettelin H."/>
            <person name="Muzzi A."/>
            <person name="Croucher N.J."/>
            <person name="Angiuoli S.V."/>
            <person name="Oggioni M."/>
            <person name="Dunning Hotopp J.C."/>
            <person name="Hu F.Z."/>
            <person name="Riley D.R."/>
            <person name="Covacci A."/>
            <person name="Mitchell T.J."/>
            <person name="Bentley S.D."/>
            <person name="Kilian M."/>
            <person name="Ehrlich G.D."/>
            <person name="Rappuoli R."/>
            <person name="Moxon E.R."/>
            <person name="Masignani V."/>
        </authorList>
    </citation>
    <scope>NUCLEOTIDE SEQUENCE [LARGE SCALE GENOMIC DNA]</scope>
    <source>
        <strain>Taiwan19F-14</strain>
    </source>
</reference>
<feature type="chain" id="PRO_1000199800" description="Uracil-DNA glycosylase">
    <location>
        <begin position="1"/>
        <end position="217"/>
    </location>
</feature>
<feature type="active site" description="Proton acceptor" evidence="1">
    <location>
        <position position="62"/>
    </location>
</feature>
<proteinExistence type="inferred from homology"/>
<organism>
    <name type="scientific">Streptococcus pneumoniae (strain Taiwan19F-14)</name>
    <dbReference type="NCBI Taxonomy" id="487213"/>
    <lineage>
        <taxon>Bacteria</taxon>
        <taxon>Bacillati</taxon>
        <taxon>Bacillota</taxon>
        <taxon>Bacilli</taxon>
        <taxon>Lactobacillales</taxon>
        <taxon>Streptococcaceae</taxon>
        <taxon>Streptococcus</taxon>
    </lineage>
</organism>
<dbReference type="EC" id="3.2.2.27" evidence="1"/>
<dbReference type="EMBL" id="CP000921">
    <property type="protein sequence ID" value="ACO23649.1"/>
    <property type="molecule type" value="Genomic_DNA"/>
</dbReference>
<dbReference type="RefSeq" id="WP_000401326.1">
    <property type="nucleotide sequence ID" value="NC_012469.1"/>
</dbReference>
<dbReference type="SMR" id="C1CRP5"/>
<dbReference type="KEGG" id="snt:SPT_1194"/>
<dbReference type="HOGENOM" id="CLU_032162_3_1_9"/>
<dbReference type="GO" id="GO:0005737">
    <property type="term" value="C:cytoplasm"/>
    <property type="evidence" value="ECO:0007669"/>
    <property type="project" value="UniProtKB-SubCell"/>
</dbReference>
<dbReference type="GO" id="GO:0004844">
    <property type="term" value="F:uracil DNA N-glycosylase activity"/>
    <property type="evidence" value="ECO:0007669"/>
    <property type="project" value="UniProtKB-UniRule"/>
</dbReference>
<dbReference type="GO" id="GO:0097510">
    <property type="term" value="P:base-excision repair, AP site formation via deaminated base removal"/>
    <property type="evidence" value="ECO:0007669"/>
    <property type="project" value="TreeGrafter"/>
</dbReference>
<dbReference type="CDD" id="cd10027">
    <property type="entry name" value="UDG-F1-like"/>
    <property type="match status" value="1"/>
</dbReference>
<dbReference type="FunFam" id="3.40.470.10:FF:000008">
    <property type="entry name" value="Uracil-DNA glycosylase"/>
    <property type="match status" value="1"/>
</dbReference>
<dbReference type="Gene3D" id="3.40.470.10">
    <property type="entry name" value="Uracil-DNA glycosylase-like domain"/>
    <property type="match status" value="1"/>
</dbReference>
<dbReference type="HAMAP" id="MF_00148">
    <property type="entry name" value="UDG"/>
    <property type="match status" value="1"/>
</dbReference>
<dbReference type="InterPro" id="IPR002043">
    <property type="entry name" value="UDG_fam1"/>
</dbReference>
<dbReference type="InterPro" id="IPR018085">
    <property type="entry name" value="Ura-DNA_Glyclase_AS"/>
</dbReference>
<dbReference type="InterPro" id="IPR005122">
    <property type="entry name" value="Uracil-DNA_glycosylase-like"/>
</dbReference>
<dbReference type="InterPro" id="IPR036895">
    <property type="entry name" value="Uracil-DNA_glycosylase-like_sf"/>
</dbReference>
<dbReference type="NCBIfam" id="NF003588">
    <property type="entry name" value="PRK05254.1-1"/>
    <property type="match status" value="1"/>
</dbReference>
<dbReference type="NCBIfam" id="NF003589">
    <property type="entry name" value="PRK05254.1-2"/>
    <property type="match status" value="1"/>
</dbReference>
<dbReference type="NCBIfam" id="NF003591">
    <property type="entry name" value="PRK05254.1-4"/>
    <property type="match status" value="1"/>
</dbReference>
<dbReference type="NCBIfam" id="NF003592">
    <property type="entry name" value="PRK05254.1-5"/>
    <property type="match status" value="1"/>
</dbReference>
<dbReference type="NCBIfam" id="TIGR00628">
    <property type="entry name" value="ung"/>
    <property type="match status" value="1"/>
</dbReference>
<dbReference type="PANTHER" id="PTHR11264">
    <property type="entry name" value="URACIL-DNA GLYCOSYLASE"/>
    <property type="match status" value="1"/>
</dbReference>
<dbReference type="PANTHER" id="PTHR11264:SF0">
    <property type="entry name" value="URACIL-DNA GLYCOSYLASE"/>
    <property type="match status" value="1"/>
</dbReference>
<dbReference type="Pfam" id="PF03167">
    <property type="entry name" value="UDG"/>
    <property type="match status" value="1"/>
</dbReference>
<dbReference type="SMART" id="SM00986">
    <property type="entry name" value="UDG"/>
    <property type="match status" value="1"/>
</dbReference>
<dbReference type="SMART" id="SM00987">
    <property type="entry name" value="UreE_C"/>
    <property type="match status" value="1"/>
</dbReference>
<dbReference type="SUPFAM" id="SSF52141">
    <property type="entry name" value="Uracil-DNA glycosylase-like"/>
    <property type="match status" value="1"/>
</dbReference>
<dbReference type="PROSITE" id="PS00130">
    <property type="entry name" value="U_DNA_GLYCOSYLASE"/>
    <property type="match status" value="1"/>
</dbReference>
<gene>
    <name evidence="1" type="primary">ung</name>
    <name type="ordered locus">SPT_1194</name>
</gene>
<name>UNG_STRZT</name>
<comment type="function">
    <text evidence="1">Excises uracil residues from the DNA which can arise as a result of misincorporation of dUMP residues by DNA polymerase or due to deamination of cytosine.</text>
</comment>
<comment type="catalytic activity">
    <reaction evidence="1">
        <text>Hydrolyzes single-stranded DNA or mismatched double-stranded DNA and polynucleotides, releasing free uracil.</text>
        <dbReference type="EC" id="3.2.2.27"/>
    </reaction>
</comment>
<comment type="subcellular location">
    <subcellularLocation>
        <location evidence="1">Cytoplasm</location>
    </subcellularLocation>
</comment>
<comment type="similarity">
    <text evidence="1">Belongs to the uracil-DNA glycosylase (UDG) superfamily. UNG family.</text>
</comment>
<evidence type="ECO:0000255" key="1">
    <source>
        <dbReference type="HAMAP-Rule" id="MF_00148"/>
    </source>
</evidence>
<keyword id="KW-0963">Cytoplasm</keyword>
<keyword id="KW-0227">DNA damage</keyword>
<keyword id="KW-0234">DNA repair</keyword>
<keyword id="KW-0378">Hydrolase</keyword>
<accession>C1CRP5</accession>
<protein>
    <recommendedName>
        <fullName evidence="1">Uracil-DNA glycosylase</fullName>
        <shortName evidence="1">UDG</shortName>
        <ecNumber evidence="1">3.2.2.27</ecNumber>
    </recommendedName>
</protein>
<sequence length="217" mass="24050">MEHSSWHALIKAQLPEGYFGKINQFMEQVYSQGIIYPPKEKVFQALLTTLLEEVKVVILGQDPYHGPGQAQGLSFSVPDSIPAPPSLQNILKELSDDIGVKKSHDLTAWAEQGVLLLNACLTVPAGQANGHAGQIWEPFTDAVIQVVNHLDRPVVFVLWGAYARKKKALVTNPHHLIIESAHPSPLSVYRGFWGSKPFSKANAFLKETGQEPIDWLR</sequence>